<comment type="function">
    <text evidence="2">Catalyzes the condensation of para-aminobenzoate (pABA) with 6-hydroxymethyl-7,8-dihydropterin diphosphate (DHPt-PP) to form 7,8-dihydropteroate (H2Pte), the immediate precursor of folate derivatives.</text>
</comment>
<comment type="catalytic activity">
    <reaction evidence="2">
        <text>(7,8-dihydropterin-6-yl)methyl diphosphate + 4-aminobenzoate = 7,8-dihydropteroate + diphosphate</text>
        <dbReference type="Rhea" id="RHEA:19949"/>
        <dbReference type="ChEBI" id="CHEBI:17836"/>
        <dbReference type="ChEBI" id="CHEBI:17839"/>
        <dbReference type="ChEBI" id="CHEBI:33019"/>
        <dbReference type="ChEBI" id="CHEBI:72950"/>
        <dbReference type="EC" id="2.5.1.15"/>
    </reaction>
</comment>
<comment type="cofactor">
    <cofactor evidence="2">
        <name>Mg(2+)</name>
        <dbReference type="ChEBI" id="CHEBI:18420"/>
    </cofactor>
</comment>
<comment type="pathway">
    <text>Cofactor biosynthesis; tetrahydrofolate biosynthesis; 7,8-dihydrofolate from 2-amino-4-hydroxy-6-hydroxymethyl-7,8-dihydropteridine diphosphate and 4-aminobenzoate: step 1/2.</text>
</comment>
<comment type="subunit">
    <text evidence="1">Homodimer.</text>
</comment>
<comment type="similarity">
    <text evidence="5">Belongs to the DHPS family.</text>
</comment>
<feature type="chain" id="PRO_0000168226" description="Dihydropteroate synthase">
    <location>
        <begin position="1"/>
        <end position="267"/>
    </location>
</feature>
<feature type="domain" description="Pterin-binding" evidence="4">
    <location>
        <begin position="1"/>
        <end position="251"/>
    </location>
</feature>
<feature type="binding site" evidence="3">
    <location>
        <position position="11"/>
    </location>
    <ligand>
        <name>Mg(2+)</name>
        <dbReference type="ChEBI" id="CHEBI:18420"/>
    </ligand>
</feature>
<feature type="binding site" evidence="2">
    <location>
        <position position="51"/>
    </location>
    <ligand>
        <name>(7,8-dihydropterin-6-yl)methyl diphosphate</name>
        <dbReference type="ChEBI" id="CHEBI:72950"/>
    </ligand>
</feature>
<feature type="binding site" evidence="2">
    <location>
        <position position="84"/>
    </location>
    <ligand>
        <name>(7,8-dihydropterin-6-yl)methyl diphosphate</name>
        <dbReference type="ChEBI" id="CHEBI:72950"/>
    </ligand>
</feature>
<feature type="binding site" evidence="2">
    <location>
        <position position="103"/>
    </location>
    <ligand>
        <name>(7,8-dihydropterin-6-yl)methyl diphosphate</name>
        <dbReference type="ChEBI" id="CHEBI:72950"/>
    </ligand>
</feature>
<feature type="binding site" evidence="2">
    <location>
        <position position="167"/>
    </location>
    <ligand>
        <name>(7,8-dihydropterin-6-yl)methyl diphosphate</name>
        <dbReference type="ChEBI" id="CHEBI:72950"/>
    </ligand>
</feature>
<feature type="binding site" evidence="2">
    <location>
        <position position="203"/>
    </location>
    <ligand>
        <name>(7,8-dihydropterin-6-yl)methyl diphosphate</name>
        <dbReference type="ChEBI" id="CHEBI:72950"/>
    </ligand>
</feature>
<feature type="binding site" evidence="2">
    <location>
        <begin position="239"/>
        <end position="241"/>
    </location>
    <ligand>
        <name>(7,8-dihydropterin-6-yl)methyl diphosphate</name>
        <dbReference type="ChEBI" id="CHEBI:72950"/>
    </ligand>
</feature>
<reference key="1">
    <citation type="journal article" date="2002" name="Lancet">
        <title>Genome and virulence determinants of high virulence community-acquired MRSA.</title>
        <authorList>
            <person name="Baba T."/>
            <person name="Takeuchi F."/>
            <person name="Kuroda M."/>
            <person name="Yuzawa H."/>
            <person name="Aoki K."/>
            <person name="Oguchi A."/>
            <person name="Nagai Y."/>
            <person name="Iwama N."/>
            <person name="Asano K."/>
            <person name="Naimi T."/>
            <person name="Kuroda H."/>
            <person name="Cui L."/>
            <person name="Yamamoto K."/>
            <person name="Hiramatsu K."/>
        </authorList>
    </citation>
    <scope>NUCLEOTIDE SEQUENCE [LARGE SCALE GENOMIC DNA]</scope>
    <source>
        <strain>MW2</strain>
    </source>
</reference>
<dbReference type="EC" id="2.5.1.15"/>
<dbReference type="EMBL" id="BA000033">
    <property type="protein sequence ID" value="BAB94334.1"/>
    <property type="molecule type" value="Genomic_DNA"/>
</dbReference>
<dbReference type="RefSeq" id="WP_000167924.1">
    <property type="nucleotide sequence ID" value="NC_003923.1"/>
</dbReference>
<dbReference type="SMR" id="Q8NXZ2"/>
<dbReference type="KEGG" id="sam:MW0469"/>
<dbReference type="HOGENOM" id="CLU_008023_0_2_9"/>
<dbReference type="UniPathway" id="UPA00077">
    <property type="reaction ID" value="UER00156"/>
</dbReference>
<dbReference type="GO" id="GO:0005829">
    <property type="term" value="C:cytosol"/>
    <property type="evidence" value="ECO:0007669"/>
    <property type="project" value="TreeGrafter"/>
</dbReference>
<dbReference type="GO" id="GO:0004156">
    <property type="term" value="F:dihydropteroate synthase activity"/>
    <property type="evidence" value="ECO:0007669"/>
    <property type="project" value="UniProtKB-EC"/>
</dbReference>
<dbReference type="GO" id="GO:0046872">
    <property type="term" value="F:metal ion binding"/>
    <property type="evidence" value="ECO:0007669"/>
    <property type="project" value="UniProtKB-KW"/>
</dbReference>
<dbReference type="GO" id="GO:0046656">
    <property type="term" value="P:folic acid biosynthetic process"/>
    <property type="evidence" value="ECO:0007669"/>
    <property type="project" value="UniProtKB-KW"/>
</dbReference>
<dbReference type="GO" id="GO:0046654">
    <property type="term" value="P:tetrahydrofolate biosynthetic process"/>
    <property type="evidence" value="ECO:0007669"/>
    <property type="project" value="UniProtKB-UniPathway"/>
</dbReference>
<dbReference type="CDD" id="cd00739">
    <property type="entry name" value="DHPS"/>
    <property type="match status" value="1"/>
</dbReference>
<dbReference type="FunFam" id="3.20.20.20:FF:000010">
    <property type="entry name" value="Dihydropteroate synthase"/>
    <property type="match status" value="1"/>
</dbReference>
<dbReference type="Gene3D" id="3.20.20.20">
    <property type="entry name" value="Dihydropteroate synthase-like"/>
    <property type="match status" value="1"/>
</dbReference>
<dbReference type="InterPro" id="IPR045031">
    <property type="entry name" value="DHP_synth-like"/>
</dbReference>
<dbReference type="InterPro" id="IPR006390">
    <property type="entry name" value="DHP_synth_dom"/>
</dbReference>
<dbReference type="InterPro" id="IPR011005">
    <property type="entry name" value="Dihydropteroate_synth-like_sf"/>
</dbReference>
<dbReference type="InterPro" id="IPR000489">
    <property type="entry name" value="Pterin-binding_dom"/>
</dbReference>
<dbReference type="NCBIfam" id="TIGR01496">
    <property type="entry name" value="DHPS"/>
    <property type="match status" value="1"/>
</dbReference>
<dbReference type="PANTHER" id="PTHR20941">
    <property type="entry name" value="FOLATE SYNTHESIS PROTEINS"/>
    <property type="match status" value="1"/>
</dbReference>
<dbReference type="PANTHER" id="PTHR20941:SF1">
    <property type="entry name" value="FOLIC ACID SYNTHESIS PROTEIN FOL1"/>
    <property type="match status" value="1"/>
</dbReference>
<dbReference type="Pfam" id="PF00809">
    <property type="entry name" value="Pterin_bind"/>
    <property type="match status" value="1"/>
</dbReference>
<dbReference type="SUPFAM" id="SSF51717">
    <property type="entry name" value="Dihydropteroate synthetase-like"/>
    <property type="match status" value="1"/>
</dbReference>
<dbReference type="PROSITE" id="PS00792">
    <property type="entry name" value="DHPS_1"/>
    <property type="match status" value="1"/>
</dbReference>
<dbReference type="PROSITE" id="PS00793">
    <property type="entry name" value="DHPS_2"/>
    <property type="match status" value="1"/>
</dbReference>
<dbReference type="PROSITE" id="PS50972">
    <property type="entry name" value="PTERIN_BINDING"/>
    <property type="match status" value="1"/>
</dbReference>
<organism>
    <name type="scientific">Staphylococcus aureus (strain MW2)</name>
    <dbReference type="NCBI Taxonomy" id="196620"/>
    <lineage>
        <taxon>Bacteria</taxon>
        <taxon>Bacillati</taxon>
        <taxon>Bacillota</taxon>
        <taxon>Bacilli</taxon>
        <taxon>Bacillales</taxon>
        <taxon>Staphylococcaceae</taxon>
        <taxon>Staphylococcus</taxon>
    </lineage>
</organism>
<sequence length="267" mass="29523">MTKTKIMGILNVTPDSFSDGGKFNNVESAINRVKAMIDEGADIIDVGGVSTRPGHEMVSLEEEMNRVLPVVEAIVGFDVKISVDTFRSEVAEACLKLGVDMINDQWAGLYDHRMFQIVAKYDAEIILMHNGNGNRDEPVVEEMLTSLLAQAHQAKIAGIPSNKIWLDPGIGFAKTRNEEAEVMARLDELVATEYPVLLATSRKRFTKEMMGYDTTPVERDEVTAATTAYGIMKGVRAVRVHNVELNAKLAKGIDFLKENENARHNLS</sequence>
<accession>Q8NXZ2</accession>
<evidence type="ECO:0000250" key="1"/>
<evidence type="ECO:0000250" key="2">
    <source>
        <dbReference type="UniProtKB" id="P0AC13"/>
    </source>
</evidence>
<evidence type="ECO:0000250" key="3">
    <source>
        <dbReference type="UniProtKB" id="P9WND1"/>
    </source>
</evidence>
<evidence type="ECO:0000255" key="4">
    <source>
        <dbReference type="PROSITE-ProRule" id="PRU00334"/>
    </source>
</evidence>
<evidence type="ECO:0000305" key="5"/>
<gene>
    <name type="primary">folP</name>
    <name type="ordered locus">MW0469</name>
</gene>
<protein>
    <recommendedName>
        <fullName>Dihydropteroate synthase</fullName>
        <shortName>DHPS</shortName>
        <ecNumber>2.5.1.15</ecNumber>
    </recommendedName>
    <alternativeName>
        <fullName>Dihydropteroate pyrophosphorylase</fullName>
    </alternativeName>
</protein>
<name>DHPS_STAAW</name>
<keyword id="KW-0289">Folate biosynthesis</keyword>
<keyword id="KW-0460">Magnesium</keyword>
<keyword id="KW-0479">Metal-binding</keyword>
<keyword id="KW-0808">Transferase</keyword>
<proteinExistence type="inferred from homology"/>